<proteinExistence type="inferred from homology"/>
<keyword id="KW-0131">Cell cycle</keyword>
<keyword id="KW-0132">Cell division</keyword>
<keyword id="KW-0997">Cell inner membrane</keyword>
<keyword id="KW-1003">Cell membrane</keyword>
<keyword id="KW-0133">Cell shape</keyword>
<keyword id="KW-0961">Cell wall biogenesis/degradation</keyword>
<keyword id="KW-0328">Glycosyltransferase</keyword>
<keyword id="KW-0472">Membrane</keyword>
<keyword id="KW-0573">Peptidoglycan synthesis</keyword>
<keyword id="KW-0808">Transferase</keyword>
<keyword id="KW-0812">Transmembrane</keyword>
<keyword id="KW-1133">Transmembrane helix</keyword>
<organism>
    <name type="scientific">Riesia pediculicola (strain USDA)</name>
    <dbReference type="NCBI Taxonomy" id="515618"/>
    <lineage>
        <taxon>Bacteria</taxon>
        <taxon>Pseudomonadati</taxon>
        <taxon>Pseudomonadota</taxon>
        <taxon>Gammaproteobacteria</taxon>
        <taxon>Enterobacterales</taxon>
        <taxon>Enterobacteriaceae</taxon>
        <taxon>Candidatus Riesia</taxon>
    </lineage>
</organism>
<dbReference type="EC" id="2.4.99.28" evidence="1"/>
<dbReference type="EMBL" id="CP001085">
    <property type="protein sequence ID" value="ADD79778.1"/>
    <property type="molecule type" value="Genomic_DNA"/>
</dbReference>
<dbReference type="RefSeq" id="WP_013087762.1">
    <property type="nucleotide sequence ID" value="NC_014109.1"/>
</dbReference>
<dbReference type="SMR" id="D4G8R2"/>
<dbReference type="STRING" id="515618.RIEPE_0482"/>
<dbReference type="KEGG" id="rip:RIEPE_0482"/>
<dbReference type="eggNOG" id="COG0772">
    <property type="taxonomic scope" value="Bacteria"/>
</dbReference>
<dbReference type="HOGENOM" id="CLU_029243_1_1_6"/>
<dbReference type="OrthoDB" id="9768187at2"/>
<dbReference type="UniPathway" id="UPA00219"/>
<dbReference type="Proteomes" id="UP000001700">
    <property type="component" value="Chromosome"/>
</dbReference>
<dbReference type="GO" id="GO:0032153">
    <property type="term" value="C:cell division site"/>
    <property type="evidence" value="ECO:0007669"/>
    <property type="project" value="UniProtKB-UniRule"/>
</dbReference>
<dbReference type="GO" id="GO:0005886">
    <property type="term" value="C:plasma membrane"/>
    <property type="evidence" value="ECO:0007669"/>
    <property type="project" value="UniProtKB-SubCell"/>
</dbReference>
<dbReference type="GO" id="GO:0015648">
    <property type="term" value="F:lipid-linked peptidoglycan transporter activity"/>
    <property type="evidence" value="ECO:0007669"/>
    <property type="project" value="TreeGrafter"/>
</dbReference>
<dbReference type="GO" id="GO:0008955">
    <property type="term" value="F:peptidoglycan glycosyltransferase activity"/>
    <property type="evidence" value="ECO:0007669"/>
    <property type="project" value="UniProtKB-UniRule"/>
</dbReference>
<dbReference type="GO" id="GO:0071555">
    <property type="term" value="P:cell wall organization"/>
    <property type="evidence" value="ECO:0007669"/>
    <property type="project" value="UniProtKB-KW"/>
</dbReference>
<dbReference type="GO" id="GO:0043093">
    <property type="term" value="P:FtsZ-dependent cytokinesis"/>
    <property type="evidence" value="ECO:0007669"/>
    <property type="project" value="UniProtKB-UniRule"/>
</dbReference>
<dbReference type="GO" id="GO:0009252">
    <property type="term" value="P:peptidoglycan biosynthetic process"/>
    <property type="evidence" value="ECO:0007669"/>
    <property type="project" value="UniProtKB-UniRule"/>
</dbReference>
<dbReference type="GO" id="GO:0008360">
    <property type="term" value="P:regulation of cell shape"/>
    <property type="evidence" value="ECO:0007669"/>
    <property type="project" value="UniProtKB-KW"/>
</dbReference>
<dbReference type="HAMAP" id="MF_00913">
    <property type="entry name" value="PGT_FtsW_proteobact"/>
    <property type="match status" value="1"/>
</dbReference>
<dbReference type="InterPro" id="IPR013437">
    <property type="entry name" value="FtsW"/>
</dbReference>
<dbReference type="InterPro" id="IPR001182">
    <property type="entry name" value="FtsW/RodA"/>
</dbReference>
<dbReference type="NCBIfam" id="TIGR02614">
    <property type="entry name" value="ftsW"/>
    <property type="match status" value="1"/>
</dbReference>
<dbReference type="PANTHER" id="PTHR30474">
    <property type="entry name" value="CELL CYCLE PROTEIN"/>
    <property type="match status" value="1"/>
</dbReference>
<dbReference type="PANTHER" id="PTHR30474:SF2">
    <property type="entry name" value="PEPTIDOGLYCAN GLYCOSYLTRANSFERASE FTSW-RELATED"/>
    <property type="match status" value="1"/>
</dbReference>
<dbReference type="Pfam" id="PF01098">
    <property type="entry name" value="FTSW_RODA_SPOVE"/>
    <property type="match status" value="1"/>
</dbReference>
<sequence length="369" mass="41733">MKKSHLYNRSLLSVTIILLIFSIIMVGSSSVSVGNRIRTDYLSFLKKNFIHSIISILCMIFVFNVPIYKWKKNKNKLILCSIILLLTLNYFGISNHGAKRWINIKIAFIQPSELVKISFSCYLSSYLSEKNKKTSTIQLISIILIVSKLLLSQPDFGTLVILYSSLLFMLFLIGKNFLFLSASSAIFTTIVLSLIYFRSYRAKRLISFLNPWSNYLGDGYQLVHSMLSFGRGKMFGQGIGNSIQKINFLPEPHTDFIISIIGEELGYLGIAMIVISLFFIFFQGMNIGRNALKDFQYFSGFLAYSISLLIIIQSIINIGSSIGILPIKGTTLPIISYGGSSKLITCIKIAILLRIDFETKMNKIQAFRR</sequence>
<accession>D4G8R2</accession>
<feature type="chain" id="PRO_0000415210" description="Probable peptidoglycan glycosyltransferase FtsW">
    <location>
        <begin position="1"/>
        <end position="369"/>
    </location>
</feature>
<feature type="transmembrane region" description="Helical" evidence="1">
    <location>
        <begin position="11"/>
        <end position="31"/>
    </location>
</feature>
<feature type="transmembrane region" description="Helical" evidence="1">
    <location>
        <begin position="48"/>
        <end position="68"/>
    </location>
</feature>
<feature type="transmembrane region" description="Helical" evidence="1">
    <location>
        <begin position="77"/>
        <end position="97"/>
    </location>
</feature>
<feature type="transmembrane region" description="Helical" evidence="1">
    <location>
        <begin position="134"/>
        <end position="151"/>
    </location>
</feature>
<feature type="transmembrane region" description="Helical" evidence="1">
    <location>
        <begin position="154"/>
        <end position="174"/>
    </location>
</feature>
<feature type="transmembrane region" description="Helical" evidence="1">
    <location>
        <begin position="177"/>
        <end position="197"/>
    </location>
</feature>
<feature type="transmembrane region" description="Helical" evidence="1">
    <location>
        <begin position="265"/>
        <end position="285"/>
    </location>
</feature>
<feature type="transmembrane region" description="Helical" evidence="1">
    <location>
        <begin position="306"/>
        <end position="326"/>
    </location>
</feature>
<name>FTSW_RIEPU</name>
<protein>
    <recommendedName>
        <fullName evidence="1">Probable peptidoglycan glycosyltransferase FtsW</fullName>
        <shortName evidence="1">PGT</shortName>
        <ecNumber evidence="1">2.4.99.28</ecNumber>
    </recommendedName>
    <alternativeName>
        <fullName evidence="1">Cell division protein FtsW</fullName>
    </alternativeName>
    <alternativeName>
        <fullName evidence="1">Cell wall polymerase</fullName>
    </alternativeName>
    <alternativeName>
        <fullName evidence="1">Peptidoglycan polymerase</fullName>
        <shortName evidence="1">PG polymerase</shortName>
    </alternativeName>
</protein>
<comment type="function">
    <text evidence="1">Peptidoglycan polymerase that is essential for cell division.</text>
</comment>
<comment type="catalytic activity">
    <reaction evidence="1">
        <text>[GlcNAc-(1-&gt;4)-Mur2Ac(oyl-L-Ala-gamma-D-Glu-L-Lys-D-Ala-D-Ala)](n)-di-trans,octa-cis-undecaprenyl diphosphate + beta-D-GlcNAc-(1-&gt;4)-Mur2Ac(oyl-L-Ala-gamma-D-Glu-L-Lys-D-Ala-D-Ala)-di-trans,octa-cis-undecaprenyl diphosphate = [GlcNAc-(1-&gt;4)-Mur2Ac(oyl-L-Ala-gamma-D-Glu-L-Lys-D-Ala-D-Ala)](n+1)-di-trans,octa-cis-undecaprenyl diphosphate + di-trans,octa-cis-undecaprenyl diphosphate + H(+)</text>
        <dbReference type="Rhea" id="RHEA:23708"/>
        <dbReference type="Rhea" id="RHEA-COMP:9602"/>
        <dbReference type="Rhea" id="RHEA-COMP:9603"/>
        <dbReference type="ChEBI" id="CHEBI:15378"/>
        <dbReference type="ChEBI" id="CHEBI:58405"/>
        <dbReference type="ChEBI" id="CHEBI:60033"/>
        <dbReference type="ChEBI" id="CHEBI:78435"/>
        <dbReference type="EC" id="2.4.99.28"/>
    </reaction>
</comment>
<comment type="pathway">
    <text evidence="1">Cell wall biogenesis; peptidoglycan biosynthesis.</text>
</comment>
<comment type="subcellular location">
    <subcellularLocation>
        <location evidence="1">Cell inner membrane</location>
        <topology evidence="1">Multi-pass membrane protein</topology>
    </subcellularLocation>
    <text evidence="1">Localizes to the division septum.</text>
</comment>
<comment type="similarity">
    <text evidence="1">Belongs to the SEDS family. FtsW subfamily.</text>
</comment>
<gene>
    <name evidence="1" type="primary">ftsW</name>
    <name type="ordered locus">RIEPE_0482</name>
</gene>
<reference key="1">
    <citation type="submission" date="2008-05" db="EMBL/GenBank/DDBJ databases">
        <title>Genome sequence of Riesia pediculicola USDA.</title>
        <authorList>
            <person name="Kirkness E.F."/>
        </authorList>
    </citation>
    <scope>NUCLEOTIDE SEQUENCE [LARGE SCALE GENOMIC DNA]</scope>
    <source>
        <strain>USDA</strain>
    </source>
</reference>
<evidence type="ECO:0000255" key="1">
    <source>
        <dbReference type="HAMAP-Rule" id="MF_00913"/>
    </source>
</evidence>